<proteinExistence type="inferred from homology"/>
<reference key="1">
    <citation type="journal article" date="2006" name="Proc. Natl. Acad. Sci. U.S.A.">
        <title>Identification of genes subject to positive selection in uropathogenic strains of Escherichia coli: a comparative genomics approach.</title>
        <authorList>
            <person name="Chen S.L."/>
            <person name="Hung C.-S."/>
            <person name="Xu J."/>
            <person name="Reigstad C.S."/>
            <person name="Magrini V."/>
            <person name="Sabo A."/>
            <person name="Blasiar D."/>
            <person name="Bieri T."/>
            <person name="Meyer R.R."/>
            <person name="Ozersky P."/>
            <person name="Armstrong J.R."/>
            <person name="Fulton R.S."/>
            <person name="Latreille J.P."/>
            <person name="Spieth J."/>
            <person name="Hooton T.M."/>
            <person name="Mardis E.R."/>
            <person name="Hultgren S.J."/>
            <person name="Gordon J.I."/>
        </authorList>
    </citation>
    <scope>NUCLEOTIDE SEQUENCE [LARGE SCALE GENOMIC DNA]</scope>
    <source>
        <strain>UTI89 / UPEC</strain>
    </source>
</reference>
<accession>Q1R7Q7</accession>
<keyword id="KW-0004">4Fe-4S</keyword>
<keyword id="KW-0408">Iron</keyword>
<keyword id="KW-0411">Iron-sulfur</keyword>
<keyword id="KW-0479">Metal-binding</keyword>
<keyword id="KW-0489">Methyltransferase</keyword>
<keyword id="KW-0698">rRNA processing</keyword>
<keyword id="KW-0949">S-adenosyl-L-methionine</keyword>
<keyword id="KW-0808">Transferase</keyword>
<sequence length="433" mass="47989">MAQFYSAKRRTTTRQIITVSVNDLDSFGQGVARHNGKTLFIPGLLPQENAEVTVTEDKKQYARAKVVRRLSDSPERETPRCPHFGVCGGCQQQHASVDLQQRSKSAALARLMKHEVSEVIADVPWGYRRRARLSLNYLPKTQQLQMGFRKAGSSDIVDVKQCPILVPQLEALLPKVRACLGSLQAMRHLGHVELVQATSGTLMILRHTAPLSSADREKLECFSHSEGLDLYLAPDSEILETVSGEMPWYDSNGLRLTFSPRDFIQVNAGVNQKMVARALEWLDVEPEDCVLDLFCGMGNFTLPLATQAASVVGVEGVPALVEKGQQNARLNGLQNVTFYHENLEEDVTKQPWAKNGFDKVLLDPARAGAAGVMQQIIKLEPIRIVYVSCNPATLARDSEALLKAGYTIARLAMLDMFPHTGHLESMVLFSRVK</sequence>
<name>RLMD_ECOUT</name>
<feature type="initiator methionine" description="Removed" evidence="1">
    <location>
        <position position="1"/>
    </location>
</feature>
<feature type="chain" id="PRO_0000282038" description="23S rRNA (uracil(1939)-C(5))-methyltransferase RlmD">
    <location>
        <begin position="2"/>
        <end position="433"/>
    </location>
</feature>
<feature type="domain" description="TRAM" evidence="2">
    <location>
        <begin position="10"/>
        <end position="68"/>
    </location>
</feature>
<feature type="active site" description="Nucleophile" evidence="2">
    <location>
        <position position="389"/>
    </location>
</feature>
<feature type="binding site" evidence="2">
    <location>
        <position position="81"/>
    </location>
    <ligand>
        <name>[4Fe-4S] cluster</name>
        <dbReference type="ChEBI" id="CHEBI:49883"/>
    </ligand>
</feature>
<feature type="binding site" evidence="2">
    <location>
        <position position="87"/>
    </location>
    <ligand>
        <name>[4Fe-4S] cluster</name>
        <dbReference type="ChEBI" id="CHEBI:49883"/>
    </ligand>
</feature>
<feature type="binding site" evidence="2">
    <location>
        <position position="90"/>
    </location>
    <ligand>
        <name>[4Fe-4S] cluster</name>
        <dbReference type="ChEBI" id="CHEBI:49883"/>
    </ligand>
</feature>
<feature type="binding site" evidence="2">
    <location>
        <position position="162"/>
    </location>
    <ligand>
        <name>[4Fe-4S] cluster</name>
        <dbReference type="ChEBI" id="CHEBI:49883"/>
    </ligand>
</feature>
<feature type="binding site" evidence="2">
    <location>
        <position position="265"/>
    </location>
    <ligand>
        <name>S-adenosyl-L-methionine</name>
        <dbReference type="ChEBI" id="CHEBI:59789"/>
    </ligand>
</feature>
<feature type="binding site" evidence="2">
    <location>
        <position position="294"/>
    </location>
    <ligand>
        <name>S-adenosyl-L-methionine</name>
        <dbReference type="ChEBI" id="CHEBI:59789"/>
    </ligand>
</feature>
<feature type="binding site" evidence="2">
    <location>
        <position position="299"/>
    </location>
    <ligand>
        <name>S-adenosyl-L-methionine</name>
        <dbReference type="ChEBI" id="CHEBI:59789"/>
    </ligand>
</feature>
<feature type="binding site" evidence="2">
    <location>
        <position position="315"/>
    </location>
    <ligand>
        <name>S-adenosyl-L-methionine</name>
        <dbReference type="ChEBI" id="CHEBI:59789"/>
    </ligand>
</feature>
<feature type="binding site" evidence="2">
    <location>
        <position position="342"/>
    </location>
    <ligand>
        <name>S-adenosyl-L-methionine</name>
        <dbReference type="ChEBI" id="CHEBI:59789"/>
    </ligand>
</feature>
<feature type="binding site" evidence="2">
    <location>
        <position position="363"/>
    </location>
    <ligand>
        <name>S-adenosyl-L-methionine</name>
        <dbReference type="ChEBI" id="CHEBI:59789"/>
    </ligand>
</feature>
<protein>
    <recommendedName>
        <fullName evidence="2">23S rRNA (uracil(1939)-C(5))-methyltransferase RlmD</fullName>
        <ecNumber evidence="2">2.1.1.190</ecNumber>
    </recommendedName>
    <alternativeName>
        <fullName evidence="2">23S rRNA(m5U1939)-methyltransferase</fullName>
    </alternativeName>
</protein>
<dbReference type="EC" id="2.1.1.190" evidence="2"/>
<dbReference type="EMBL" id="CP000243">
    <property type="protein sequence ID" value="ABE08607.1"/>
    <property type="molecule type" value="Genomic_DNA"/>
</dbReference>
<dbReference type="RefSeq" id="WP_000046816.1">
    <property type="nucleotide sequence ID" value="NZ_CP064825.1"/>
</dbReference>
<dbReference type="SMR" id="Q1R7Q7"/>
<dbReference type="KEGG" id="eci:UTI89_C3155"/>
<dbReference type="HOGENOM" id="CLU_014689_8_2_6"/>
<dbReference type="Proteomes" id="UP000001952">
    <property type="component" value="Chromosome"/>
</dbReference>
<dbReference type="GO" id="GO:0051539">
    <property type="term" value="F:4 iron, 4 sulfur cluster binding"/>
    <property type="evidence" value="ECO:0007669"/>
    <property type="project" value="UniProtKB-KW"/>
</dbReference>
<dbReference type="GO" id="GO:0005506">
    <property type="term" value="F:iron ion binding"/>
    <property type="evidence" value="ECO:0007669"/>
    <property type="project" value="UniProtKB-UniRule"/>
</dbReference>
<dbReference type="GO" id="GO:0003723">
    <property type="term" value="F:RNA binding"/>
    <property type="evidence" value="ECO:0007669"/>
    <property type="project" value="InterPro"/>
</dbReference>
<dbReference type="GO" id="GO:0070041">
    <property type="term" value="F:rRNA (uridine-C5-)-methyltransferase activity"/>
    <property type="evidence" value="ECO:0007669"/>
    <property type="project" value="UniProtKB-UniRule"/>
</dbReference>
<dbReference type="GO" id="GO:0070475">
    <property type="term" value="P:rRNA base methylation"/>
    <property type="evidence" value="ECO:0007669"/>
    <property type="project" value="TreeGrafter"/>
</dbReference>
<dbReference type="CDD" id="cd02440">
    <property type="entry name" value="AdoMet_MTases"/>
    <property type="match status" value="1"/>
</dbReference>
<dbReference type="FunFam" id="3.40.50.150:FF:000009">
    <property type="entry name" value="23S rRNA (Uracil(1939)-C(5))-methyltransferase RlmD"/>
    <property type="match status" value="1"/>
</dbReference>
<dbReference type="FunFam" id="2.40.50.1070:FF:000004">
    <property type="entry name" value="23S rRNA (uracil(1939)-C(5))-methyltransferase RlmD"/>
    <property type="match status" value="1"/>
</dbReference>
<dbReference type="FunFam" id="2.40.50.140:FF:000097">
    <property type="entry name" value="23S rRNA (uracil(1939)-C(5))-methyltransferase RlmD"/>
    <property type="match status" value="1"/>
</dbReference>
<dbReference type="Gene3D" id="2.40.50.1070">
    <property type="match status" value="1"/>
</dbReference>
<dbReference type="Gene3D" id="2.40.50.140">
    <property type="entry name" value="Nucleic acid-binding proteins"/>
    <property type="match status" value="1"/>
</dbReference>
<dbReference type="Gene3D" id="3.40.50.150">
    <property type="entry name" value="Vaccinia Virus protein VP39"/>
    <property type="match status" value="1"/>
</dbReference>
<dbReference type="HAMAP" id="MF_01010">
    <property type="entry name" value="23SrRNA_methyltr_RlmD"/>
    <property type="match status" value="1"/>
</dbReference>
<dbReference type="InterPro" id="IPR001566">
    <property type="entry name" value="23S_rRNA_MeTrfase_RlmD"/>
</dbReference>
<dbReference type="InterPro" id="IPR030390">
    <property type="entry name" value="MeTrfase_TrmA_AS"/>
</dbReference>
<dbReference type="InterPro" id="IPR030391">
    <property type="entry name" value="MeTrfase_TrmA_CS"/>
</dbReference>
<dbReference type="InterPro" id="IPR012340">
    <property type="entry name" value="NA-bd_OB-fold"/>
</dbReference>
<dbReference type="InterPro" id="IPR029063">
    <property type="entry name" value="SAM-dependent_MTases_sf"/>
</dbReference>
<dbReference type="InterPro" id="IPR002792">
    <property type="entry name" value="TRAM_dom"/>
</dbReference>
<dbReference type="InterPro" id="IPR010280">
    <property type="entry name" value="U5_MeTrfase_fam"/>
</dbReference>
<dbReference type="NCBIfam" id="NF009639">
    <property type="entry name" value="PRK13168.1"/>
    <property type="match status" value="1"/>
</dbReference>
<dbReference type="NCBIfam" id="TIGR00479">
    <property type="entry name" value="rumA"/>
    <property type="match status" value="1"/>
</dbReference>
<dbReference type="PANTHER" id="PTHR11061:SF49">
    <property type="entry name" value="23S RRNA (URACIL(1939)-C(5))-METHYLTRANSFERASE RLMD"/>
    <property type="match status" value="1"/>
</dbReference>
<dbReference type="PANTHER" id="PTHR11061">
    <property type="entry name" value="RNA M5U METHYLTRANSFERASE"/>
    <property type="match status" value="1"/>
</dbReference>
<dbReference type="Pfam" id="PF01938">
    <property type="entry name" value="TRAM"/>
    <property type="match status" value="1"/>
</dbReference>
<dbReference type="Pfam" id="PF05958">
    <property type="entry name" value="tRNA_U5-meth_tr"/>
    <property type="match status" value="1"/>
</dbReference>
<dbReference type="SUPFAM" id="SSF50249">
    <property type="entry name" value="Nucleic acid-binding proteins"/>
    <property type="match status" value="1"/>
</dbReference>
<dbReference type="SUPFAM" id="SSF53335">
    <property type="entry name" value="S-adenosyl-L-methionine-dependent methyltransferases"/>
    <property type="match status" value="1"/>
</dbReference>
<dbReference type="PROSITE" id="PS51687">
    <property type="entry name" value="SAM_MT_RNA_M5U"/>
    <property type="match status" value="1"/>
</dbReference>
<dbReference type="PROSITE" id="PS50926">
    <property type="entry name" value="TRAM"/>
    <property type="match status" value="1"/>
</dbReference>
<dbReference type="PROSITE" id="PS01230">
    <property type="entry name" value="TRMA_1"/>
    <property type="match status" value="1"/>
</dbReference>
<dbReference type="PROSITE" id="PS01231">
    <property type="entry name" value="TRMA_2"/>
    <property type="match status" value="1"/>
</dbReference>
<gene>
    <name evidence="2" type="primary">rlmD</name>
    <name type="synonym">rumA</name>
    <name type="ordered locus">UTI89_C3155</name>
</gene>
<comment type="function">
    <text evidence="2">Catalyzes the formation of 5-methyl-uridine at position 1939 (m5U1939) in 23S rRNA.</text>
</comment>
<comment type="catalytic activity">
    <reaction evidence="2">
        <text>uridine(1939) in 23S rRNA + S-adenosyl-L-methionine = 5-methyluridine(1939) in 23S rRNA + S-adenosyl-L-homocysteine + H(+)</text>
        <dbReference type="Rhea" id="RHEA:42908"/>
        <dbReference type="Rhea" id="RHEA-COMP:10278"/>
        <dbReference type="Rhea" id="RHEA-COMP:10279"/>
        <dbReference type="ChEBI" id="CHEBI:15378"/>
        <dbReference type="ChEBI" id="CHEBI:57856"/>
        <dbReference type="ChEBI" id="CHEBI:59789"/>
        <dbReference type="ChEBI" id="CHEBI:65315"/>
        <dbReference type="ChEBI" id="CHEBI:74447"/>
        <dbReference type="EC" id="2.1.1.190"/>
    </reaction>
</comment>
<comment type="similarity">
    <text evidence="2">Belongs to the class I-like SAM-binding methyltransferase superfamily. RNA M5U methyltransferase family. RlmD subfamily.</text>
</comment>
<organism>
    <name type="scientific">Escherichia coli (strain UTI89 / UPEC)</name>
    <dbReference type="NCBI Taxonomy" id="364106"/>
    <lineage>
        <taxon>Bacteria</taxon>
        <taxon>Pseudomonadati</taxon>
        <taxon>Pseudomonadota</taxon>
        <taxon>Gammaproteobacteria</taxon>
        <taxon>Enterobacterales</taxon>
        <taxon>Enterobacteriaceae</taxon>
        <taxon>Escherichia</taxon>
    </lineage>
</organism>
<evidence type="ECO:0000250" key="1"/>
<evidence type="ECO:0000255" key="2">
    <source>
        <dbReference type="HAMAP-Rule" id="MF_01010"/>
    </source>
</evidence>